<accession>Q0W8D0</accession>
<evidence type="ECO:0000255" key="1">
    <source>
        <dbReference type="HAMAP-Rule" id="MF_00291"/>
    </source>
</evidence>
<evidence type="ECO:0000305" key="2"/>
<reference key="1">
    <citation type="journal article" date="2006" name="Science">
        <title>Genome of rice cluster I archaea -- the key methane producers in the rice rhizosphere.</title>
        <authorList>
            <person name="Erkel C."/>
            <person name="Kube M."/>
            <person name="Reinhardt R."/>
            <person name="Liesack W."/>
        </authorList>
    </citation>
    <scope>NUCLEOTIDE SEQUENCE [LARGE SCALE GENOMIC DNA]</scope>
    <source>
        <strain>DSM 22066 / NBRC 105507 / MRE50</strain>
    </source>
</reference>
<name>RS2_METAR</name>
<comment type="similarity">
    <text evidence="1">Belongs to the universal ribosomal protein uS2 family.</text>
</comment>
<gene>
    <name evidence="1" type="primary">rps2</name>
    <name type="ordered locus">UNCMA_28140</name>
    <name type="ORF">LRC401</name>
</gene>
<sequence length="207" mass="23254">MAETENVREIRDENYQSLIPMDEYLAAGVHIGTQQKTEDMKKFIYRVRSDGLYVLDVQSTDERIRAAAKFLSRYDPANVLVVCARQYGQHPAEMFARAIGARHIVGRFIPGTLTNPVYMFFAEPDVVVVTDPIGDAQAVTEAISIGVPVVAMCDTNNMTSNIDLVIPTNNKGRKALALVYWLLAREVSRERNEQGFSYTVNDFESEI</sequence>
<protein>
    <recommendedName>
        <fullName evidence="1">Small ribosomal subunit protein uS2</fullName>
    </recommendedName>
    <alternativeName>
        <fullName evidence="2">30S ribosomal protein S2</fullName>
    </alternativeName>
</protein>
<organism>
    <name type="scientific">Methanocella arvoryzae (strain DSM 22066 / NBRC 105507 / MRE50)</name>
    <dbReference type="NCBI Taxonomy" id="351160"/>
    <lineage>
        <taxon>Archaea</taxon>
        <taxon>Methanobacteriati</taxon>
        <taxon>Methanobacteriota</taxon>
        <taxon>Stenosarchaea group</taxon>
        <taxon>Methanomicrobia</taxon>
        <taxon>Methanocellales</taxon>
        <taxon>Methanocellaceae</taxon>
        <taxon>Methanocella</taxon>
    </lineage>
</organism>
<keyword id="KW-1185">Reference proteome</keyword>
<keyword id="KW-0687">Ribonucleoprotein</keyword>
<keyword id="KW-0689">Ribosomal protein</keyword>
<feature type="chain" id="PRO_0000352083" description="Small ribosomal subunit protein uS2">
    <location>
        <begin position="1"/>
        <end position="207"/>
    </location>
</feature>
<dbReference type="EMBL" id="AM114193">
    <property type="protein sequence ID" value="CAJ35363.1"/>
    <property type="molecule type" value="Genomic_DNA"/>
</dbReference>
<dbReference type="RefSeq" id="WP_012037129.1">
    <property type="nucleotide sequence ID" value="NC_009464.1"/>
</dbReference>
<dbReference type="SMR" id="Q0W8D0"/>
<dbReference type="STRING" id="351160.LRC401"/>
<dbReference type="GeneID" id="5145096"/>
<dbReference type="KEGG" id="rci:LRC401"/>
<dbReference type="PATRIC" id="fig|351160.9.peg.2884"/>
<dbReference type="eggNOG" id="arCOG04245">
    <property type="taxonomic scope" value="Archaea"/>
</dbReference>
<dbReference type="OrthoDB" id="371797at2157"/>
<dbReference type="Proteomes" id="UP000000663">
    <property type="component" value="Chromosome"/>
</dbReference>
<dbReference type="GO" id="GO:0015935">
    <property type="term" value="C:small ribosomal subunit"/>
    <property type="evidence" value="ECO:0007669"/>
    <property type="project" value="InterPro"/>
</dbReference>
<dbReference type="GO" id="GO:0003735">
    <property type="term" value="F:structural constituent of ribosome"/>
    <property type="evidence" value="ECO:0007669"/>
    <property type="project" value="InterPro"/>
</dbReference>
<dbReference type="GO" id="GO:0006412">
    <property type="term" value="P:translation"/>
    <property type="evidence" value="ECO:0007669"/>
    <property type="project" value="UniProtKB-UniRule"/>
</dbReference>
<dbReference type="FunFam" id="3.40.50.10490:FF:000030">
    <property type="entry name" value="30S ribosomal protein S2"/>
    <property type="match status" value="1"/>
</dbReference>
<dbReference type="Gene3D" id="3.40.50.10490">
    <property type="entry name" value="Glucose-6-phosphate isomerase like protein, domain 1"/>
    <property type="match status" value="1"/>
</dbReference>
<dbReference type="HAMAP" id="MF_00291_A">
    <property type="entry name" value="Ribosomal_uS2_A"/>
    <property type="match status" value="1"/>
</dbReference>
<dbReference type="InterPro" id="IPR001865">
    <property type="entry name" value="Ribosomal_uS2"/>
</dbReference>
<dbReference type="InterPro" id="IPR023454">
    <property type="entry name" value="Ribosomal_uS2_arc"/>
</dbReference>
<dbReference type="InterPro" id="IPR018130">
    <property type="entry name" value="Ribosomal_uS2_CS"/>
</dbReference>
<dbReference type="InterPro" id="IPR005707">
    <property type="entry name" value="Ribosomal_uS2_euk/arc"/>
</dbReference>
<dbReference type="InterPro" id="IPR023591">
    <property type="entry name" value="Ribosomal_uS2_flav_dom_sf"/>
</dbReference>
<dbReference type="NCBIfam" id="TIGR01012">
    <property type="entry name" value="uS2_euk_arch"/>
    <property type="match status" value="1"/>
</dbReference>
<dbReference type="PANTHER" id="PTHR11489">
    <property type="entry name" value="40S RIBOSOMAL PROTEIN SA"/>
    <property type="match status" value="1"/>
</dbReference>
<dbReference type="Pfam" id="PF00318">
    <property type="entry name" value="Ribosomal_S2"/>
    <property type="match status" value="2"/>
</dbReference>
<dbReference type="PRINTS" id="PR00395">
    <property type="entry name" value="RIBOSOMALS2"/>
</dbReference>
<dbReference type="SUPFAM" id="SSF52313">
    <property type="entry name" value="Ribosomal protein S2"/>
    <property type="match status" value="1"/>
</dbReference>
<dbReference type="PROSITE" id="PS00962">
    <property type="entry name" value="RIBOSOMAL_S2_1"/>
    <property type="match status" value="1"/>
</dbReference>
<dbReference type="PROSITE" id="PS00963">
    <property type="entry name" value="RIBOSOMAL_S2_2"/>
    <property type="match status" value="1"/>
</dbReference>
<proteinExistence type="inferred from homology"/>